<organism>
    <name type="scientific">Methanocaldococcus jannaschii (strain ATCC 43067 / DSM 2661 / JAL-1 / JCM 10045 / NBRC 100440)</name>
    <name type="common">Methanococcus jannaschii</name>
    <dbReference type="NCBI Taxonomy" id="243232"/>
    <lineage>
        <taxon>Archaea</taxon>
        <taxon>Methanobacteriati</taxon>
        <taxon>Methanobacteriota</taxon>
        <taxon>Methanomada group</taxon>
        <taxon>Methanococci</taxon>
        <taxon>Methanococcales</taxon>
        <taxon>Methanocaldococcaceae</taxon>
        <taxon>Methanocaldococcus</taxon>
    </lineage>
</organism>
<reference key="1">
    <citation type="journal article" date="1996" name="Science">
        <title>Complete genome sequence of the methanogenic archaeon, Methanococcus jannaschii.</title>
        <authorList>
            <person name="Bult C.J."/>
            <person name="White O."/>
            <person name="Olsen G.J."/>
            <person name="Zhou L."/>
            <person name="Fleischmann R.D."/>
            <person name="Sutton G.G."/>
            <person name="Blake J.A."/>
            <person name="FitzGerald L.M."/>
            <person name="Clayton R.A."/>
            <person name="Gocayne J.D."/>
            <person name="Kerlavage A.R."/>
            <person name="Dougherty B.A."/>
            <person name="Tomb J.-F."/>
            <person name="Adams M.D."/>
            <person name="Reich C.I."/>
            <person name="Overbeek R."/>
            <person name="Kirkness E.F."/>
            <person name="Weinstock K.G."/>
            <person name="Merrick J.M."/>
            <person name="Glodek A."/>
            <person name="Scott J.L."/>
            <person name="Geoghagen N.S.M."/>
            <person name="Weidman J.F."/>
            <person name="Fuhrmann J.L."/>
            <person name="Nguyen D."/>
            <person name="Utterback T.R."/>
            <person name="Kelley J.M."/>
            <person name="Peterson J.D."/>
            <person name="Sadow P.W."/>
            <person name="Hanna M.C."/>
            <person name="Cotton M.D."/>
            <person name="Roberts K.M."/>
            <person name="Hurst M.A."/>
            <person name="Kaine B.P."/>
            <person name="Borodovsky M."/>
            <person name="Klenk H.-P."/>
            <person name="Fraser C.M."/>
            <person name="Smith H.O."/>
            <person name="Woese C.R."/>
            <person name="Venter J.C."/>
        </authorList>
    </citation>
    <scope>NUCLEOTIDE SEQUENCE [LARGE SCALE GENOMIC DNA]</scope>
    <source>
        <strain>ATCC 43067 / DSM 2661 / JAL-1 / JCM 10045 / NBRC 100440</strain>
    </source>
</reference>
<sequence length="728" mass="86467">MHDIGKITEGFQNNIKKGKRSNKHPHPLYALPIIKNIEFDYLFDIPIEVFAILSHHTQLYNNLYADYQQYKKGTFLIEEIKEFIKNSKEAYESLGFSKFFEFEDLKIEDIPKDAKPLELHRLRRKYWIEANNYIKSLSFDDKIKIKSIFSFMFSILQLCDDFASLNFSEYAKDREGIFDDVLENPEIYVPTLNIDNPISFILKDYEPYKFQKELYNSKNKFVMLFAPCGRGKTEGALLWALNALKNFKRNKIILAMPTQVTSNAMYDRLVKIFGEENVGLFHGKSFIKLRDSKEIEDEDDLEEIRDENFKGNVFFKPITITTIDHVIYSFVHGFSQADFALGNIQNSVIIFDEVHYYEKYTLEHLLTLFDILRRMDIPHLLMSGTLPNFLMNNLEGYELVVDEEGLNYKPFKLKCSENHLIWKEDDEWKVNENIINEIIENYKKGLSQAIILNTVERAREFYKAVRDKVPAILYHSQFAYKDRVKKEDEIFTLEEMRKSQNKPYVIVATQVIEISLDMSVDVMYSELSPPDALGQRAGRLHRKGKDWRENGKEYKLKIFLPYKHLPYSKELIEKTINHIKFYEKPLDYRDIKDFVDNVYKDYNLSIPSDLKLFFDEAILFGRHWTDISTIDEEGRFFKVRDDKFMKIEVVPQVYFDELGENSLRAEYMAKIPAYLILNEMKNEEGLIHFYPYEKRVGRKTRRYLICSFKYTYEIGFDYKEEEEFEDIL</sequence>
<protein>
    <recommendedName>
        <fullName>Putative CRISPR-associated nuclease/helicase Cas3</fullName>
        <ecNumber>3.1.-.-</ecNumber>
        <ecNumber>3.6.4.-</ecNumber>
    </recommendedName>
</protein>
<dbReference type="EC" id="3.1.-.-"/>
<dbReference type="EC" id="3.6.4.-"/>
<dbReference type="EMBL" id="L77117">
    <property type="protein sequence ID" value="AAB98365.1"/>
    <property type="molecule type" value="Genomic_DNA"/>
</dbReference>
<dbReference type="PIR" id="H64346">
    <property type="entry name" value="H64346"/>
</dbReference>
<dbReference type="SMR" id="Q57821"/>
<dbReference type="FunCoup" id="Q57821">
    <property type="interactions" value="2"/>
</dbReference>
<dbReference type="STRING" id="243232.MJ_0376"/>
<dbReference type="PaxDb" id="243232-MJ_0376"/>
<dbReference type="EnsemblBacteria" id="AAB98365">
    <property type="protein sequence ID" value="AAB98365"/>
    <property type="gene ID" value="MJ_0376"/>
</dbReference>
<dbReference type="KEGG" id="mja:MJ_0376"/>
<dbReference type="eggNOG" id="arCOG01445">
    <property type="taxonomic scope" value="Archaea"/>
</dbReference>
<dbReference type="HOGENOM" id="CLU_009347_1_1_2"/>
<dbReference type="InParanoid" id="Q57821"/>
<dbReference type="OrthoDB" id="43851at2157"/>
<dbReference type="PhylomeDB" id="Q57821"/>
<dbReference type="Proteomes" id="UP000000805">
    <property type="component" value="Chromosome"/>
</dbReference>
<dbReference type="GO" id="GO:0005829">
    <property type="term" value="C:cytosol"/>
    <property type="evidence" value="ECO:0000318"/>
    <property type="project" value="GO_Central"/>
</dbReference>
<dbReference type="GO" id="GO:0005524">
    <property type="term" value="F:ATP binding"/>
    <property type="evidence" value="ECO:0007669"/>
    <property type="project" value="UniProtKB-KW"/>
</dbReference>
<dbReference type="GO" id="GO:0140097">
    <property type="term" value="F:catalytic activity, acting on DNA"/>
    <property type="evidence" value="ECO:0007669"/>
    <property type="project" value="UniProtKB-ARBA"/>
</dbReference>
<dbReference type="GO" id="GO:0046872">
    <property type="term" value="F:metal ion binding"/>
    <property type="evidence" value="ECO:0007669"/>
    <property type="project" value="UniProtKB-KW"/>
</dbReference>
<dbReference type="GO" id="GO:0004518">
    <property type="term" value="F:nuclease activity"/>
    <property type="evidence" value="ECO:0007669"/>
    <property type="project" value="UniProtKB-KW"/>
</dbReference>
<dbReference type="GO" id="GO:0003676">
    <property type="term" value="F:nucleic acid binding"/>
    <property type="evidence" value="ECO:0007669"/>
    <property type="project" value="InterPro"/>
</dbReference>
<dbReference type="GO" id="GO:0003724">
    <property type="term" value="F:RNA helicase activity"/>
    <property type="evidence" value="ECO:0000318"/>
    <property type="project" value="GO_Central"/>
</dbReference>
<dbReference type="GO" id="GO:0051607">
    <property type="term" value="P:defense response to virus"/>
    <property type="evidence" value="ECO:0007669"/>
    <property type="project" value="UniProtKB-KW"/>
</dbReference>
<dbReference type="CDD" id="cd09639">
    <property type="entry name" value="Cas3_I"/>
    <property type="match status" value="1"/>
</dbReference>
<dbReference type="Gene3D" id="1.10.3210.30">
    <property type="match status" value="1"/>
</dbReference>
<dbReference type="Gene3D" id="3.40.50.300">
    <property type="entry name" value="P-loop containing nucleotide triphosphate hydrolases"/>
    <property type="match status" value="2"/>
</dbReference>
<dbReference type="InterPro" id="IPR054712">
    <property type="entry name" value="Cas3-like_dom"/>
</dbReference>
<dbReference type="InterPro" id="IPR006483">
    <property type="entry name" value="CRISPR-assoc_Cas3_HD"/>
</dbReference>
<dbReference type="InterPro" id="IPR038257">
    <property type="entry name" value="CRISPR-assoc_Cas3_HD_sf"/>
</dbReference>
<dbReference type="InterPro" id="IPR011545">
    <property type="entry name" value="DEAD/DEAH_box_helicase_dom"/>
</dbReference>
<dbReference type="InterPro" id="IPR050079">
    <property type="entry name" value="DEAD_box_RNA_helicase"/>
</dbReference>
<dbReference type="InterPro" id="IPR014001">
    <property type="entry name" value="Helicase_ATP-bd"/>
</dbReference>
<dbReference type="InterPro" id="IPR001650">
    <property type="entry name" value="Helicase_C-like"/>
</dbReference>
<dbReference type="InterPro" id="IPR006474">
    <property type="entry name" value="Helicase_Cas3_CRISPR-ass_core"/>
</dbReference>
<dbReference type="InterPro" id="IPR027417">
    <property type="entry name" value="P-loop_NTPase"/>
</dbReference>
<dbReference type="NCBIfam" id="TIGR01587">
    <property type="entry name" value="cas3_core"/>
    <property type="match status" value="1"/>
</dbReference>
<dbReference type="PANTHER" id="PTHR47959">
    <property type="entry name" value="ATP-DEPENDENT RNA HELICASE RHLE-RELATED"/>
    <property type="match status" value="1"/>
</dbReference>
<dbReference type="PANTHER" id="PTHR47959:SF16">
    <property type="entry name" value="CRISPR-ASSOCIATED NUCLEASE_HELICASE CAS3-RELATED"/>
    <property type="match status" value="1"/>
</dbReference>
<dbReference type="Pfam" id="PF22590">
    <property type="entry name" value="Cas3-like_C_2"/>
    <property type="match status" value="1"/>
</dbReference>
<dbReference type="Pfam" id="PF00270">
    <property type="entry name" value="DEAD"/>
    <property type="match status" value="1"/>
</dbReference>
<dbReference type="SMART" id="SM00487">
    <property type="entry name" value="DEXDc"/>
    <property type="match status" value="1"/>
</dbReference>
<dbReference type="SMART" id="SM00490">
    <property type="entry name" value="HELICc"/>
    <property type="match status" value="1"/>
</dbReference>
<dbReference type="SUPFAM" id="SSF52540">
    <property type="entry name" value="P-loop containing nucleoside triphosphate hydrolases"/>
    <property type="match status" value="1"/>
</dbReference>
<dbReference type="PROSITE" id="PS51643">
    <property type="entry name" value="HD_CAS3"/>
    <property type="match status" value="1"/>
</dbReference>
<dbReference type="PROSITE" id="PS51192">
    <property type="entry name" value="HELICASE_ATP_BIND_1"/>
    <property type="match status" value="1"/>
</dbReference>
<dbReference type="PROSITE" id="PS51194">
    <property type="entry name" value="HELICASE_CTER"/>
    <property type="match status" value="1"/>
</dbReference>
<proteinExistence type="inferred from homology"/>
<name>CAS3_METJA</name>
<comment type="function">
    <text evidence="1">CRISPR (clustered regularly interspaced short palindromic repeat), is an adaptive immune system that provides protection against mobile genetic elements (viruses, transposable elements and conjugative plasmids). CRISPR clusters contain sequences complementary to antecedent mobile elements and target invading nucleic acids. CRISPR clusters are transcribed and processed into CRISPR RNA (crRNA). Cas3 plus Cascade participate in CRISPR interference, the third stage of CRISPR immunity (By similarity).</text>
</comment>
<comment type="cofactor">
    <cofactor evidence="1">
        <name>Mg(2+)</name>
        <dbReference type="ChEBI" id="CHEBI:18420"/>
    </cofactor>
</comment>
<comment type="similarity">
    <text evidence="6">In the N-terminal section; belongs to the CRISPR-associated nuclease Cas3-HD family.</text>
</comment>
<comment type="similarity">
    <text evidence="6">In the central section; belongs to the CRISPR-associated helicase Cas3 family.</text>
</comment>
<comment type="caution">
    <text evidence="6">This protein is about 60 residues too short at the N-terminus compared to its close orthologs.</text>
</comment>
<evidence type="ECO:0000250" key="1"/>
<evidence type="ECO:0000255" key="2"/>
<evidence type="ECO:0000255" key="3">
    <source>
        <dbReference type="PROSITE-ProRule" id="PRU00541"/>
    </source>
</evidence>
<evidence type="ECO:0000255" key="4">
    <source>
        <dbReference type="PROSITE-ProRule" id="PRU00542"/>
    </source>
</evidence>
<evidence type="ECO:0000255" key="5">
    <source>
        <dbReference type="PROSITE-ProRule" id="PRU00974"/>
    </source>
</evidence>
<evidence type="ECO:0000305" key="6"/>
<feature type="chain" id="PRO_0000106839" description="Putative CRISPR-associated nuclease/helicase Cas3">
    <location>
        <begin position="1"/>
        <end position="728"/>
    </location>
</feature>
<feature type="domain" description="HD Cas3-type" evidence="5">
    <location>
        <begin position="1"/>
        <end position="163"/>
    </location>
</feature>
<feature type="domain" description="Helicase ATP-binding" evidence="3">
    <location>
        <begin position="213"/>
        <end position="404"/>
    </location>
</feature>
<feature type="domain" description="Helicase C-terminal" evidence="4">
    <location>
        <begin position="434"/>
        <end position="592"/>
    </location>
</feature>
<feature type="short sequence motif" description="DEAH box">
    <location>
        <begin position="352"/>
        <end position="355"/>
    </location>
</feature>
<feature type="binding site" evidence="2">
    <location>
        <position position="3"/>
    </location>
    <ligand>
        <name>Mg(2+)</name>
        <dbReference type="ChEBI" id="CHEBI:18420"/>
    </ligand>
</feature>
<feature type="binding site" evidence="2">
    <location>
        <position position="55"/>
    </location>
    <ligand>
        <name>Mg(2+)</name>
        <dbReference type="ChEBI" id="CHEBI:18420"/>
    </ligand>
</feature>
<gene>
    <name type="primary">cas3</name>
    <name type="ordered locus">MJ0376</name>
</gene>
<keyword id="KW-0051">Antiviral defense</keyword>
<keyword id="KW-0067">ATP-binding</keyword>
<keyword id="KW-0347">Helicase</keyword>
<keyword id="KW-0378">Hydrolase</keyword>
<keyword id="KW-0460">Magnesium</keyword>
<keyword id="KW-0479">Metal-binding</keyword>
<keyword id="KW-0540">Nuclease</keyword>
<keyword id="KW-0547">Nucleotide-binding</keyword>
<keyword id="KW-1185">Reference proteome</keyword>
<accession>Q57821</accession>